<reference key="1">
    <citation type="journal article" date="2003" name="Science">
        <title>Genome of Geobacter sulfurreducens: metal reduction in subsurface environments.</title>
        <authorList>
            <person name="Methe B.A."/>
            <person name="Nelson K.E."/>
            <person name="Eisen J.A."/>
            <person name="Paulsen I.T."/>
            <person name="Nelson W.C."/>
            <person name="Heidelberg J.F."/>
            <person name="Wu D."/>
            <person name="Wu M."/>
            <person name="Ward N.L."/>
            <person name="Beanan M.J."/>
            <person name="Dodson R.J."/>
            <person name="Madupu R."/>
            <person name="Brinkac L.M."/>
            <person name="Daugherty S.C."/>
            <person name="DeBoy R.T."/>
            <person name="Durkin A.S."/>
            <person name="Gwinn M.L."/>
            <person name="Kolonay J.F."/>
            <person name="Sullivan S.A."/>
            <person name="Haft D.H."/>
            <person name="Selengut J."/>
            <person name="Davidsen T.M."/>
            <person name="Zafar N."/>
            <person name="White O."/>
            <person name="Tran B."/>
            <person name="Romero C."/>
            <person name="Forberger H.A."/>
            <person name="Weidman J.F."/>
            <person name="Khouri H.M."/>
            <person name="Feldblyum T.V."/>
            <person name="Utterback T.R."/>
            <person name="Van Aken S.E."/>
            <person name="Lovley D.R."/>
            <person name="Fraser C.M."/>
        </authorList>
    </citation>
    <scope>NUCLEOTIDE SEQUENCE [LARGE SCALE GENOMIC DNA]</scope>
    <source>
        <strain>ATCC 51573 / DSM 12127 / PCA</strain>
    </source>
</reference>
<organism>
    <name type="scientific">Geobacter sulfurreducens (strain ATCC 51573 / DSM 12127 / PCA)</name>
    <dbReference type="NCBI Taxonomy" id="243231"/>
    <lineage>
        <taxon>Bacteria</taxon>
        <taxon>Pseudomonadati</taxon>
        <taxon>Thermodesulfobacteriota</taxon>
        <taxon>Desulfuromonadia</taxon>
        <taxon>Geobacterales</taxon>
        <taxon>Geobacteraceae</taxon>
        <taxon>Geobacter</taxon>
    </lineage>
</organism>
<evidence type="ECO:0000255" key="1">
    <source>
        <dbReference type="HAMAP-Rule" id="MF_01346"/>
    </source>
</evidence>
<comment type="function">
    <text evidence="1">Produces ATP from ADP in the presence of a proton gradient across the membrane. The alpha chain is a regulatory subunit.</text>
</comment>
<comment type="catalytic activity">
    <reaction evidence="1">
        <text>ATP + H2O + 4 H(+)(in) = ADP + phosphate + 5 H(+)(out)</text>
        <dbReference type="Rhea" id="RHEA:57720"/>
        <dbReference type="ChEBI" id="CHEBI:15377"/>
        <dbReference type="ChEBI" id="CHEBI:15378"/>
        <dbReference type="ChEBI" id="CHEBI:30616"/>
        <dbReference type="ChEBI" id="CHEBI:43474"/>
        <dbReference type="ChEBI" id="CHEBI:456216"/>
        <dbReference type="EC" id="7.1.2.2"/>
    </reaction>
</comment>
<comment type="subunit">
    <text evidence="1">F-type ATPases have 2 components, CF(1) - the catalytic core - and CF(0) - the membrane proton channel. CF(1) has five subunits: alpha(3), beta(3), gamma(1), delta(1), epsilon(1). CF(0) has three main subunits: a(1), b(2) and c(9-12). The alpha and beta chains form an alternating ring which encloses part of the gamma chain. CF(1) is attached to CF(0) by a central stalk formed by the gamma and epsilon chains, while a peripheral stalk is formed by the delta and b chains.</text>
</comment>
<comment type="subcellular location">
    <subcellularLocation>
        <location evidence="1">Cell inner membrane</location>
        <topology evidence="1">Peripheral membrane protein</topology>
    </subcellularLocation>
</comment>
<comment type="similarity">
    <text evidence="1">Belongs to the ATPase alpha/beta chains family.</text>
</comment>
<keyword id="KW-0066">ATP synthesis</keyword>
<keyword id="KW-0067">ATP-binding</keyword>
<keyword id="KW-0997">Cell inner membrane</keyword>
<keyword id="KW-1003">Cell membrane</keyword>
<keyword id="KW-0139">CF(1)</keyword>
<keyword id="KW-0375">Hydrogen ion transport</keyword>
<keyword id="KW-0406">Ion transport</keyword>
<keyword id="KW-0472">Membrane</keyword>
<keyword id="KW-0547">Nucleotide-binding</keyword>
<keyword id="KW-1185">Reference proteome</keyword>
<keyword id="KW-1278">Translocase</keyword>
<keyword id="KW-0813">Transport</keyword>
<protein>
    <recommendedName>
        <fullName evidence="1">ATP synthase subunit alpha</fullName>
        <ecNumber evidence="1">7.1.2.2</ecNumber>
    </recommendedName>
    <alternativeName>
        <fullName evidence="1">ATP synthase F1 sector subunit alpha</fullName>
    </alternativeName>
    <alternativeName>
        <fullName evidence="1">F-ATPase subunit alpha</fullName>
    </alternativeName>
</protein>
<dbReference type="EC" id="7.1.2.2" evidence="1"/>
<dbReference type="EMBL" id="AE017180">
    <property type="protein sequence ID" value="AAR33446.1"/>
    <property type="molecule type" value="Genomic_DNA"/>
</dbReference>
<dbReference type="RefSeq" id="NP_951173.1">
    <property type="nucleotide sequence ID" value="NC_002939.5"/>
</dbReference>
<dbReference type="RefSeq" id="WP_010940787.1">
    <property type="nucleotide sequence ID" value="NC_002939.5"/>
</dbReference>
<dbReference type="SMR" id="Q74GY2"/>
<dbReference type="FunCoup" id="Q74GY2">
    <property type="interactions" value="413"/>
</dbReference>
<dbReference type="STRING" id="243231.GSU0111"/>
<dbReference type="EnsemblBacteria" id="AAR33446">
    <property type="protein sequence ID" value="AAR33446"/>
    <property type="gene ID" value="GSU0111"/>
</dbReference>
<dbReference type="KEGG" id="gsu:GSU0111"/>
<dbReference type="PATRIC" id="fig|243231.5.peg.111"/>
<dbReference type="eggNOG" id="COG0056">
    <property type="taxonomic scope" value="Bacteria"/>
</dbReference>
<dbReference type="HOGENOM" id="CLU_010091_2_1_7"/>
<dbReference type="InParanoid" id="Q74GY2"/>
<dbReference type="OrthoDB" id="9803053at2"/>
<dbReference type="Proteomes" id="UP000000577">
    <property type="component" value="Chromosome"/>
</dbReference>
<dbReference type="GO" id="GO:0005886">
    <property type="term" value="C:plasma membrane"/>
    <property type="evidence" value="ECO:0007669"/>
    <property type="project" value="UniProtKB-SubCell"/>
</dbReference>
<dbReference type="GO" id="GO:0045259">
    <property type="term" value="C:proton-transporting ATP synthase complex"/>
    <property type="evidence" value="ECO:0007669"/>
    <property type="project" value="UniProtKB-KW"/>
</dbReference>
<dbReference type="GO" id="GO:0043531">
    <property type="term" value="F:ADP binding"/>
    <property type="evidence" value="ECO:0000318"/>
    <property type="project" value="GO_Central"/>
</dbReference>
<dbReference type="GO" id="GO:0005524">
    <property type="term" value="F:ATP binding"/>
    <property type="evidence" value="ECO:0000318"/>
    <property type="project" value="GO_Central"/>
</dbReference>
<dbReference type="GO" id="GO:0046933">
    <property type="term" value="F:proton-transporting ATP synthase activity, rotational mechanism"/>
    <property type="evidence" value="ECO:0007669"/>
    <property type="project" value="UniProtKB-UniRule"/>
</dbReference>
<dbReference type="GO" id="GO:0015986">
    <property type="term" value="P:proton motive force-driven ATP synthesis"/>
    <property type="evidence" value="ECO:0000318"/>
    <property type="project" value="GO_Central"/>
</dbReference>
<dbReference type="CDD" id="cd18113">
    <property type="entry name" value="ATP-synt_F1_alpha_C"/>
    <property type="match status" value="1"/>
</dbReference>
<dbReference type="CDD" id="cd18116">
    <property type="entry name" value="ATP-synt_F1_alpha_N"/>
    <property type="match status" value="1"/>
</dbReference>
<dbReference type="CDD" id="cd01132">
    <property type="entry name" value="F1-ATPase_alpha_CD"/>
    <property type="match status" value="1"/>
</dbReference>
<dbReference type="FunFam" id="1.20.150.20:FF:000001">
    <property type="entry name" value="ATP synthase subunit alpha"/>
    <property type="match status" value="1"/>
</dbReference>
<dbReference type="FunFam" id="2.40.30.20:FF:000001">
    <property type="entry name" value="ATP synthase subunit alpha"/>
    <property type="match status" value="1"/>
</dbReference>
<dbReference type="FunFam" id="3.40.50.300:FF:000002">
    <property type="entry name" value="ATP synthase subunit alpha"/>
    <property type="match status" value="1"/>
</dbReference>
<dbReference type="Gene3D" id="2.40.30.20">
    <property type="match status" value="1"/>
</dbReference>
<dbReference type="Gene3D" id="1.20.150.20">
    <property type="entry name" value="ATP synthase alpha/beta chain, C-terminal domain"/>
    <property type="match status" value="1"/>
</dbReference>
<dbReference type="Gene3D" id="3.40.50.300">
    <property type="entry name" value="P-loop containing nucleotide triphosphate hydrolases"/>
    <property type="match status" value="1"/>
</dbReference>
<dbReference type="HAMAP" id="MF_01346">
    <property type="entry name" value="ATP_synth_alpha_bact"/>
    <property type="match status" value="1"/>
</dbReference>
<dbReference type="InterPro" id="IPR023366">
    <property type="entry name" value="ATP_synth_asu-like_sf"/>
</dbReference>
<dbReference type="InterPro" id="IPR000793">
    <property type="entry name" value="ATP_synth_asu_C"/>
</dbReference>
<dbReference type="InterPro" id="IPR038376">
    <property type="entry name" value="ATP_synth_asu_C_sf"/>
</dbReference>
<dbReference type="InterPro" id="IPR033732">
    <property type="entry name" value="ATP_synth_F1_a_nt-bd_dom"/>
</dbReference>
<dbReference type="InterPro" id="IPR005294">
    <property type="entry name" value="ATP_synth_F1_asu"/>
</dbReference>
<dbReference type="InterPro" id="IPR020003">
    <property type="entry name" value="ATPase_a/bsu_AS"/>
</dbReference>
<dbReference type="InterPro" id="IPR004100">
    <property type="entry name" value="ATPase_F1/V1/A1_a/bsu_N"/>
</dbReference>
<dbReference type="InterPro" id="IPR036121">
    <property type="entry name" value="ATPase_F1/V1/A1_a/bsu_N_sf"/>
</dbReference>
<dbReference type="InterPro" id="IPR000194">
    <property type="entry name" value="ATPase_F1/V1/A1_a/bsu_nucl-bd"/>
</dbReference>
<dbReference type="InterPro" id="IPR027417">
    <property type="entry name" value="P-loop_NTPase"/>
</dbReference>
<dbReference type="NCBIfam" id="TIGR00962">
    <property type="entry name" value="atpA"/>
    <property type="match status" value="1"/>
</dbReference>
<dbReference type="NCBIfam" id="NF009884">
    <property type="entry name" value="PRK13343.1"/>
    <property type="match status" value="1"/>
</dbReference>
<dbReference type="PANTHER" id="PTHR48082">
    <property type="entry name" value="ATP SYNTHASE SUBUNIT ALPHA, MITOCHONDRIAL"/>
    <property type="match status" value="1"/>
</dbReference>
<dbReference type="PANTHER" id="PTHR48082:SF2">
    <property type="entry name" value="ATP SYNTHASE SUBUNIT ALPHA, MITOCHONDRIAL"/>
    <property type="match status" value="1"/>
</dbReference>
<dbReference type="Pfam" id="PF00006">
    <property type="entry name" value="ATP-synt_ab"/>
    <property type="match status" value="1"/>
</dbReference>
<dbReference type="Pfam" id="PF00306">
    <property type="entry name" value="ATP-synt_ab_C"/>
    <property type="match status" value="1"/>
</dbReference>
<dbReference type="Pfam" id="PF02874">
    <property type="entry name" value="ATP-synt_ab_N"/>
    <property type="match status" value="1"/>
</dbReference>
<dbReference type="PIRSF" id="PIRSF039088">
    <property type="entry name" value="F_ATPase_subunit_alpha"/>
    <property type="match status" value="1"/>
</dbReference>
<dbReference type="SUPFAM" id="SSF47917">
    <property type="entry name" value="C-terminal domain of alpha and beta subunits of F1 ATP synthase"/>
    <property type="match status" value="1"/>
</dbReference>
<dbReference type="SUPFAM" id="SSF50615">
    <property type="entry name" value="N-terminal domain of alpha and beta subunits of F1 ATP synthase"/>
    <property type="match status" value="1"/>
</dbReference>
<dbReference type="SUPFAM" id="SSF52540">
    <property type="entry name" value="P-loop containing nucleoside triphosphate hydrolases"/>
    <property type="match status" value="1"/>
</dbReference>
<dbReference type="PROSITE" id="PS00152">
    <property type="entry name" value="ATPASE_ALPHA_BETA"/>
    <property type="match status" value="1"/>
</dbReference>
<accession>Q74GY2</accession>
<proteinExistence type="inferred from homology"/>
<feature type="chain" id="PRO_0000238255" description="ATP synthase subunit alpha">
    <location>
        <begin position="1"/>
        <end position="503"/>
    </location>
</feature>
<feature type="binding site" evidence="1">
    <location>
        <begin position="170"/>
        <end position="177"/>
    </location>
    <ligand>
        <name>ATP</name>
        <dbReference type="ChEBI" id="CHEBI:30616"/>
    </ligand>
</feature>
<feature type="site" description="Required for activity" evidence="1">
    <location>
        <position position="363"/>
    </location>
</feature>
<gene>
    <name evidence="1" type="primary">atpA</name>
    <name type="ordered locus">GSU0111</name>
</gene>
<sequence length="503" mass="54752">MEIRAEEISEIIRKQIKEYGKEVEVAETGTIISVGDGIARIHGLDKAMAGELLEFPGGVSGMVLNLEEDNVGAAILGEDNENIKEGTTVKRTGRIVEVPVGEALIGRVVNAIGQPIDGKGPINTTTFGKVEVKAPGIVKRKSVHQPMQTGLKAIDSMVPIGRGQRELIIGDRQTGKTAVAIDTIINQKGGDLICIYVAIGQKRSTVAQVVSKLQEYGAMDYTIVVSASASEPAPLQFIAPYTGVTMGEYFRDNGKHALIIYDDLSKQAVAYRQLSLLLRRPPGREAYPGDVFYLHSRLLERAAKLSDDCGAGSLTALPIIETQAGDVSAYIPTNVISITDGQIYLESDLFYSGVRPAINVGLSVSRVGGSAQVKAMKQVAGTLRLNLAQYREMAAFAQFGSDLDKATQMQLARGERLVEILKQPQYRPIPNEKQVLVIFAANNGFVDEYPVSSLRRYESELYSFFDSRKADILAELRDKKAIDDDLKAKMIAALEELKKEFTA</sequence>
<name>ATPA_GEOSL</name>